<accession>A4Y4K8</accession>
<reference key="1">
    <citation type="submission" date="2007-04" db="EMBL/GenBank/DDBJ databases">
        <title>Complete sequence of Shewanella putrefaciens CN-32.</title>
        <authorList>
            <consortium name="US DOE Joint Genome Institute"/>
            <person name="Copeland A."/>
            <person name="Lucas S."/>
            <person name="Lapidus A."/>
            <person name="Barry K."/>
            <person name="Detter J.C."/>
            <person name="Glavina del Rio T."/>
            <person name="Hammon N."/>
            <person name="Israni S."/>
            <person name="Dalin E."/>
            <person name="Tice H."/>
            <person name="Pitluck S."/>
            <person name="Chain P."/>
            <person name="Malfatti S."/>
            <person name="Shin M."/>
            <person name="Vergez L."/>
            <person name="Schmutz J."/>
            <person name="Larimer F."/>
            <person name="Land M."/>
            <person name="Hauser L."/>
            <person name="Kyrpides N."/>
            <person name="Mikhailova N."/>
            <person name="Romine M.F."/>
            <person name="Fredrickson J."/>
            <person name="Tiedje J."/>
            <person name="Richardson P."/>
        </authorList>
    </citation>
    <scope>NUCLEOTIDE SEQUENCE [LARGE SCALE GENOMIC DNA]</scope>
    <source>
        <strain>CN-32 / ATCC BAA-453</strain>
    </source>
</reference>
<keyword id="KW-0963">Cytoplasm</keyword>
<keyword id="KW-0275">Fatty acid biosynthesis</keyword>
<keyword id="KW-0276">Fatty acid metabolism</keyword>
<keyword id="KW-0444">Lipid biosynthesis</keyword>
<keyword id="KW-0443">Lipid metabolism</keyword>
<keyword id="KW-0460">Magnesium</keyword>
<keyword id="KW-0479">Metal-binding</keyword>
<keyword id="KW-0808">Transferase</keyword>
<evidence type="ECO:0000255" key="1">
    <source>
        <dbReference type="HAMAP-Rule" id="MF_00101"/>
    </source>
</evidence>
<proteinExistence type="inferred from homology"/>
<protein>
    <recommendedName>
        <fullName evidence="1">Holo-[acyl-carrier-protein] synthase</fullName>
        <shortName evidence="1">Holo-ACP synthase</shortName>
        <ecNumber evidence="1">2.7.8.7</ecNumber>
    </recommendedName>
    <alternativeName>
        <fullName evidence="1">4'-phosphopantetheinyl transferase AcpS</fullName>
    </alternativeName>
</protein>
<sequence length="127" mass="13597">MAIVGLGTDIVKIERIEAHVARSGDKLARRVLTEAELAIYIAHSQPNRYLAKRFAAKEAAAKALGTGIGRGVSFQHIHIGNTPDGAPTIRFTDGAQQRLAFLNGVFGHISIADEKSYAIATVILESC</sequence>
<organism>
    <name type="scientific">Shewanella putrefaciens (strain CN-32 / ATCC BAA-453)</name>
    <dbReference type="NCBI Taxonomy" id="319224"/>
    <lineage>
        <taxon>Bacteria</taxon>
        <taxon>Pseudomonadati</taxon>
        <taxon>Pseudomonadota</taxon>
        <taxon>Gammaproteobacteria</taxon>
        <taxon>Alteromonadales</taxon>
        <taxon>Shewanellaceae</taxon>
        <taxon>Shewanella</taxon>
    </lineage>
</organism>
<dbReference type="EC" id="2.7.8.7" evidence="1"/>
<dbReference type="EMBL" id="CP000681">
    <property type="protein sequence ID" value="ABP74891.1"/>
    <property type="molecule type" value="Genomic_DNA"/>
</dbReference>
<dbReference type="SMR" id="A4Y4K8"/>
<dbReference type="STRING" id="319224.Sputcn32_1163"/>
<dbReference type="KEGG" id="spc:Sputcn32_1163"/>
<dbReference type="eggNOG" id="COG0736">
    <property type="taxonomic scope" value="Bacteria"/>
</dbReference>
<dbReference type="HOGENOM" id="CLU_089696_3_1_6"/>
<dbReference type="GO" id="GO:0005737">
    <property type="term" value="C:cytoplasm"/>
    <property type="evidence" value="ECO:0007669"/>
    <property type="project" value="UniProtKB-SubCell"/>
</dbReference>
<dbReference type="GO" id="GO:0008897">
    <property type="term" value="F:holo-[acyl-carrier-protein] synthase activity"/>
    <property type="evidence" value="ECO:0007669"/>
    <property type="project" value="UniProtKB-UniRule"/>
</dbReference>
<dbReference type="GO" id="GO:0000287">
    <property type="term" value="F:magnesium ion binding"/>
    <property type="evidence" value="ECO:0007669"/>
    <property type="project" value="UniProtKB-UniRule"/>
</dbReference>
<dbReference type="GO" id="GO:0006633">
    <property type="term" value="P:fatty acid biosynthetic process"/>
    <property type="evidence" value="ECO:0007669"/>
    <property type="project" value="UniProtKB-UniRule"/>
</dbReference>
<dbReference type="FunFam" id="3.90.470.20:FF:000001">
    <property type="entry name" value="Holo-[acyl-carrier-protein] synthase"/>
    <property type="match status" value="1"/>
</dbReference>
<dbReference type="Gene3D" id="3.90.470.20">
    <property type="entry name" value="4'-phosphopantetheinyl transferase domain"/>
    <property type="match status" value="1"/>
</dbReference>
<dbReference type="HAMAP" id="MF_00101">
    <property type="entry name" value="AcpS"/>
    <property type="match status" value="1"/>
</dbReference>
<dbReference type="InterPro" id="IPR008278">
    <property type="entry name" value="4-PPantetheinyl_Trfase_dom"/>
</dbReference>
<dbReference type="InterPro" id="IPR037143">
    <property type="entry name" value="4-PPantetheinyl_Trfase_dom_sf"/>
</dbReference>
<dbReference type="InterPro" id="IPR002582">
    <property type="entry name" value="ACPS"/>
</dbReference>
<dbReference type="InterPro" id="IPR004568">
    <property type="entry name" value="Ppantetheine-prot_Trfase_dom"/>
</dbReference>
<dbReference type="NCBIfam" id="TIGR00516">
    <property type="entry name" value="acpS"/>
    <property type="match status" value="1"/>
</dbReference>
<dbReference type="NCBIfam" id="TIGR00556">
    <property type="entry name" value="pantethn_trn"/>
    <property type="match status" value="1"/>
</dbReference>
<dbReference type="Pfam" id="PF01648">
    <property type="entry name" value="ACPS"/>
    <property type="match status" value="1"/>
</dbReference>
<dbReference type="SUPFAM" id="SSF56214">
    <property type="entry name" value="4'-phosphopantetheinyl transferase"/>
    <property type="match status" value="1"/>
</dbReference>
<gene>
    <name evidence="1" type="primary">acpS</name>
    <name type="ordered locus">Sputcn32_1163</name>
</gene>
<name>ACPS_SHEPC</name>
<feature type="chain" id="PRO_1000008495" description="Holo-[acyl-carrier-protein] synthase">
    <location>
        <begin position="1"/>
        <end position="127"/>
    </location>
</feature>
<feature type="binding site" evidence="1">
    <location>
        <position position="9"/>
    </location>
    <ligand>
        <name>Mg(2+)</name>
        <dbReference type="ChEBI" id="CHEBI:18420"/>
    </ligand>
</feature>
<feature type="binding site" evidence="1">
    <location>
        <position position="58"/>
    </location>
    <ligand>
        <name>Mg(2+)</name>
        <dbReference type="ChEBI" id="CHEBI:18420"/>
    </ligand>
</feature>
<comment type="function">
    <text evidence="1">Transfers the 4'-phosphopantetheine moiety from coenzyme A to a Ser of acyl-carrier-protein.</text>
</comment>
<comment type="catalytic activity">
    <reaction evidence="1">
        <text>apo-[ACP] + CoA = holo-[ACP] + adenosine 3',5'-bisphosphate + H(+)</text>
        <dbReference type="Rhea" id="RHEA:12068"/>
        <dbReference type="Rhea" id="RHEA-COMP:9685"/>
        <dbReference type="Rhea" id="RHEA-COMP:9690"/>
        <dbReference type="ChEBI" id="CHEBI:15378"/>
        <dbReference type="ChEBI" id="CHEBI:29999"/>
        <dbReference type="ChEBI" id="CHEBI:57287"/>
        <dbReference type="ChEBI" id="CHEBI:58343"/>
        <dbReference type="ChEBI" id="CHEBI:64479"/>
        <dbReference type="EC" id="2.7.8.7"/>
    </reaction>
</comment>
<comment type="cofactor">
    <cofactor evidence="1">
        <name>Mg(2+)</name>
        <dbReference type="ChEBI" id="CHEBI:18420"/>
    </cofactor>
</comment>
<comment type="subcellular location">
    <subcellularLocation>
        <location evidence="1">Cytoplasm</location>
    </subcellularLocation>
</comment>
<comment type="similarity">
    <text evidence="1">Belongs to the P-Pant transferase superfamily. AcpS family.</text>
</comment>